<feature type="chain" id="PRO_0000150077" description="H(2):CoB-CoM heterodisulfide,ferredoxin reductase subunit C">
    <location>
        <begin position="1"/>
        <end position="185"/>
    </location>
</feature>
<feature type="domain" description="4Fe-4S ferredoxin-type 1" evidence="2">
    <location>
        <begin position="25"/>
        <end position="55"/>
    </location>
</feature>
<feature type="domain" description="4Fe-4S ferredoxin-type 2" evidence="2">
    <location>
        <begin position="68"/>
        <end position="99"/>
    </location>
</feature>
<feature type="binding site" evidence="2">
    <location>
        <position position="35"/>
    </location>
    <ligand>
        <name>[4Fe-4S] cluster</name>
        <dbReference type="ChEBI" id="CHEBI:49883"/>
        <label>1</label>
    </ligand>
</feature>
<feature type="binding site" evidence="2">
    <location>
        <position position="38"/>
    </location>
    <ligand>
        <name>[4Fe-4S] cluster</name>
        <dbReference type="ChEBI" id="CHEBI:49883"/>
        <label>1</label>
    </ligand>
</feature>
<feature type="binding site" evidence="2">
    <location>
        <position position="41"/>
    </location>
    <ligand>
        <name>[4Fe-4S] cluster</name>
        <dbReference type="ChEBI" id="CHEBI:49883"/>
        <label>1</label>
    </ligand>
</feature>
<feature type="binding site" evidence="2">
    <location>
        <position position="45"/>
    </location>
    <ligand>
        <name>[4Fe-4S] cluster</name>
        <dbReference type="ChEBI" id="CHEBI:49883"/>
        <label>2</label>
    </ligand>
</feature>
<feature type="binding site" evidence="2">
    <location>
        <position position="79"/>
    </location>
    <ligand>
        <name>[4Fe-4S] cluster</name>
        <dbReference type="ChEBI" id="CHEBI:49883"/>
        <label>2</label>
    </ligand>
</feature>
<feature type="binding site" evidence="2">
    <location>
        <position position="82"/>
    </location>
    <ligand>
        <name>[4Fe-4S] cluster</name>
        <dbReference type="ChEBI" id="CHEBI:49883"/>
        <label>2</label>
    </ligand>
</feature>
<feature type="binding site" evidence="2">
    <location>
        <position position="85"/>
    </location>
    <ligand>
        <name>[4Fe-4S] cluster</name>
        <dbReference type="ChEBI" id="CHEBI:49883"/>
        <label>2</label>
    </ligand>
</feature>
<feature type="binding site" evidence="2">
    <location>
        <position position="89"/>
    </location>
    <ligand>
        <name>[4Fe-4S] cluster</name>
        <dbReference type="ChEBI" id="CHEBI:49883"/>
        <label>1</label>
    </ligand>
</feature>
<reference key="1">
    <citation type="journal article" date="1997" name="J. Bacteriol.">
        <title>Complete genome sequence of Methanobacterium thermoautotrophicum deltaH: functional analysis and comparative genomics.</title>
        <authorList>
            <person name="Smith D.R."/>
            <person name="Doucette-Stamm L.A."/>
            <person name="Deloughery C."/>
            <person name="Lee H.-M."/>
            <person name="Dubois J."/>
            <person name="Aldredge T."/>
            <person name="Bashirzadeh R."/>
            <person name="Blakely D."/>
            <person name="Cook R."/>
            <person name="Gilbert K."/>
            <person name="Harrison D."/>
            <person name="Hoang L."/>
            <person name="Keagle P."/>
            <person name="Lumm W."/>
            <person name="Pothier B."/>
            <person name="Qiu D."/>
            <person name="Spadafora R."/>
            <person name="Vicare R."/>
            <person name="Wang Y."/>
            <person name="Wierzbowski J."/>
            <person name="Gibson R."/>
            <person name="Jiwani N."/>
            <person name="Caruso A."/>
            <person name="Bush D."/>
            <person name="Safer H."/>
            <person name="Patwell D."/>
            <person name="Prabhakar S."/>
            <person name="McDougall S."/>
            <person name="Shimer G."/>
            <person name="Goyal A."/>
            <person name="Pietrovski S."/>
            <person name="Church G.M."/>
            <person name="Daniels C.J."/>
            <person name="Mao J.-I."/>
            <person name="Rice P."/>
            <person name="Noelling J."/>
            <person name="Reeve J.N."/>
        </authorList>
    </citation>
    <scope>NUCLEOTIDE SEQUENCE [LARGE SCALE GENOMIC DNA]</scope>
    <source>
        <strain>ATCC 29096 / DSM 1053 / JCM 10044 / NBRC 100330 / Delta H</strain>
    </source>
</reference>
<organism>
    <name type="scientific">Methanothermobacter thermautotrophicus (strain ATCC 29096 / DSM 1053 / JCM 10044 / NBRC 100330 / Delta H)</name>
    <name type="common">Methanobacterium thermoautotrophicum</name>
    <dbReference type="NCBI Taxonomy" id="187420"/>
    <lineage>
        <taxon>Archaea</taxon>
        <taxon>Methanobacteriati</taxon>
        <taxon>Methanobacteriota</taxon>
        <taxon>Methanomada group</taxon>
        <taxon>Methanobacteria</taxon>
        <taxon>Methanobacteriales</taxon>
        <taxon>Methanobacteriaceae</taxon>
        <taxon>Methanothermobacter</taxon>
    </lineage>
</organism>
<evidence type="ECO:0000250" key="1">
    <source>
        <dbReference type="UniProtKB" id="Q50754"/>
    </source>
</evidence>
<evidence type="ECO:0000255" key="2">
    <source>
        <dbReference type="PROSITE-ProRule" id="PRU00711"/>
    </source>
</evidence>
<evidence type="ECO:0000305" key="3"/>
<dbReference type="EC" id="1.8.98.5" evidence="1"/>
<dbReference type="EMBL" id="AE000666">
    <property type="protein sequence ID" value="AAB86344.1"/>
    <property type="status" value="ALT_INIT"/>
    <property type="molecule type" value="Genomic_DNA"/>
</dbReference>
<dbReference type="PIR" id="C69118">
    <property type="entry name" value="C69118"/>
</dbReference>
<dbReference type="SMR" id="O27906"/>
<dbReference type="FunCoup" id="O27906">
    <property type="interactions" value="69"/>
</dbReference>
<dbReference type="IntAct" id="O27906">
    <property type="interactions" value="1"/>
</dbReference>
<dbReference type="STRING" id="187420.MTH_1878"/>
<dbReference type="PaxDb" id="187420-MTH_1878"/>
<dbReference type="EnsemblBacteria" id="AAB86344">
    <property type="protein sequence ID" value="AAB86344"/>
    <property type="gene ID" value="MTH_1878"/>
</dbReference>
<dbReference type="KEGG" id="mth:MTH_1878"/>
<dbReference type="PATRIC" id="fig|187420.15.peg.1833"/>
<dbReference type="HOGENOM" id="CLU_068200_0_0_2"/>
<dbReference type="InParanoid" id="O27906"/>
<dbReference type="BioCyc" id="MetaCyc:HDRCMAUTO-MONOMER"/>
<dbReference type="UniPathway" id="UPA00647">
    <property type="reaction ID" value="UER00700"/>
</dbReference>
<dbReference type="Proteomes" id="UP000005223">
    <property type="component" value="Chromosome"/>
</dbReference>
<dbReference type="GO" id="GO:0005886">
    <property type="term" value="C:plasma membrane"/>
    <property type="evidence" value="ECO:0007669"/>
    <property type="project" value="TreeGrafter"/>
</dbReference>
<dbReference type="GO" id="GO:0051539">
    <property type="term" value="F:4 iron, 4 sulfur cluster binding"/>
    <property type="evidence" value="ECO:0007669"/>
    <property type="project" value="UniProtKB-KW"/>
</dbReference>
<dbReference type="GO" id="GO:0051912">
    <property type="term" value="F:CoB--CoM heterodisulfide reductase activity"/>
    <property type="evidence" value="ECO:0007669"/>
    <property type="project" value="InterPro"/>
</dbReference>
<dbReference type="GO" id="GO:0046872">
    <property type="term" value="F:metal ion binding"/>
    <property type="evidence" value="ECO:0007669"/>
    <property type="project" value="UniProtKB-KW"/>
</dbReference>
<dbReference type="GO" id="GO:0015948">
    <property type="term" value="P:methanogenesis"/>
    <property type="evidence" value="ECO:0007669"/>
    <property type="project" value="UniProtKB-KW"/>
</dbReference>
<dbReference type="FunFam" id="1.10.1060.10:FF:000026">
    <property type="entry name" value="H(2):CoB-CoM heterodisulfide,ferredoxin reductase subunit C"/>
    <property type="match status" value="1"/>
</dbReference>
<dbReference type="Gene3D" id="1.10.1060.10">
    <property type="entry name" value="Alpha-helical ferredoxin"/>
    <property type="match status" value="1"/>
</dbReference>
<dbReference type="InterPro" id="IPR017896">
    <property type="entry name" value="4Fe4S_Fe-S-bd"/>
</dbReference>
<dbReference type="InterPro" id="IPR017900">
    <property type="entry name" value="4Fe4S_Fe_S_CS"/>
</dbReference>
<dbReference type="InterPro" id="IPR017680">
    <property type="entry name" value="CoB/CoM_hetero-S_Rdtase_csu"/>
</dbReference>
<dbReference type="InterPro" id="IPR051460">
    <property type="entry name" value="HdrC_iron-sulfur_subunit"/>
</dbReference>
<dbReference type="InterPro" id="IPR009051">
    <property type="entry name" value="Helical_ferredxn"/>
</dbReference>
<dbReference type="NCBIfam" id="TIGR03290">
    <property type="entry name" value="CoB_CoM_SS_C"/>
    <property type="match status" value="1"/>
</dbReference>
<dbReference type="PANTHER" id="PTHR43255:SF1">
    <property type="entry name" value="IRON-SULFUR-BINDING OXIDOREDUCTASE FADF-RELATED"/>
    <property type="match status" value="1"/>
</dbReference>
<dbReference type="PANTHER" id="PTHR43255">
    <property type="entry name" value="IRON-SULFUR-BINDING OXIDOREDUCTASE FADF-RELATED-RELATED"/>
    <property type="match status" value="1"/>
</dbReference>
<dbReference type="Pfam" id="PF13183">
    <property type="entry name" value="Fer4_8"/>
    <property type="match status" value="1"/>
</dbReference>
<dbReference type="SUPFAM" id="SSF46548">
    <property type="entry name" value="alpha-helical ferredoxin"/>
    <property type="match status" value="1"/>
</dbReference>
<dbReference type="PROSITE" id="PS00198">
    <property type="entry name" value="4FE4S_FER_1"/>
    <property type="match status" value="2"/>
</dbReference>
<dbReference type="PROSITE" id="PS51379">
    <property type="entry name" value="4FE4S_FER_2"/>
    <property type="match status" value="2"/>
</dbReference>
<keyword id="KW-0004">4Fe-4S</keyword>
<keyword id="KW-0408">Iron</keyword>
<keyword id="KW-0411">Iron-sulfur</keyword>
<keyword id="KW-0479">Metal-binding</keyword>
<keyword id="KW-0484">Methanogenesis</keyword>
<keyword id="KW-0560">Oxidoreductase</keyword>
<keyword id="KW-1185">Reference proteome</keyword>
<keyword id="KW-0677">Repeat</keyword>
<accession>O27906</accession>
<name>HDRC_METTH</name>
<gene>
    <name type="primary">hdrC</name>
    <name type="ordered locus">MTH_1878</name>
</gene>
<sequence>MTLLQREENIIRKGNIDKEFSEKIKAAGGDSLEYCFQCGTCTGSCPSGRRTPYRVRQIIRKANVGLKDEIISDPALWMCTTCYSCQERCPRKVKIVDVVKLARNEAAKAGFMAPAHKAVGSFVIKTGHGVPINDATMELRKAVGLGELPPTTHQFPEALEEVQKIIKATGFDQLIGYNWETGELE</sequence>
<proteinExistence type="inferred from homology"/>
<comment type="function">
    <text evidence="1">Part of a complex that catalyzes the reversible reduction of CoM-S-S-CoB to the thiol-coenzymes H-S-CoM (coenzyme M) and H-S-CoB (coenzyme B).</text>
</comment>
<comment type="catalytic activity">
    <reaction evidence="1">
        <text>coenzyme B + coenzyme M + 2 reduced [2Fe-2S]-[ferredoxin] + 2 H(+) = coenzyme M-coenzyme B heterodisulfide + 2 H2 + 2 oxidized [2Fe-2S]-[ferredoxin]</text>
        <dbReference type="Rhea" id="RHEA:55748"/>
        <dbReference type="Rhea" id="RHEA-COMP:10000"/>
        <dbReference type="Rhea" id="RHEA-COMP:10001"/>
        <dbReference type="ChEBI" id="CHEBI:15378"/>
        <dbReference type="ChEBI" id="CHEBI:18276"/>
        <dbReference type="ChEBI" id="CHEBI:33737"/>
        <dbReference type="ChEBI" id="CHEBI:33738"/>
        <dbReference type="ChEBI" id="CHEBI:58319"/>
        <dbReference type="ChEBI" id="CHEBI:58411"/>
        <dbReference type="ChEBI" id="CHEBI:58596"/>
        <dbReference type="EC" id="1.8.98.5"/>
    </reaction>
</comment>
<comment type="cofactor">
    <cofactor evidence="2">
        <name>[4Fe-4S] cluster</name>
        <dbReference type="ChEBI" id="CHEBI:49883"/>
    </cofactor>
    <text evidence="2">Binds 2 [4Fe-4S] clusters per subunit.</text>
</comment>
<comment type="pathway">
    <text evidence="1">Cofactor metabolism; coenzyme M-coenzyme B heterodisulfide reduction; coenzyme B and coenzyme M from coenzyme M-coenzyme B heterodisulfide: step 1/1.</text>
</comment>
<comment type="subunit">
    <text evidence="1">The heterodisulfide reductase is composed of three subunits; HdrA, HdrB and HdrC. It forms a complex with the F420-non-reducing hydrogenase (Mvh), which provides the reducing equivalents to the heterodisulfide reductase.</text>
</comment>
<comment type="similarity">
    <text evidence="3">Belongs to the HdrC family.</text>
</comment>
<comment type="sequence caution" evidence="3">
    <conflict type="erroneous initiation">
        <sequence resource="EMBL-CDS" id="AAB86344"/>
    </conflict>
</comment>
<protein>
    <recommendedName>
        <fullName evidence="1">H(2):CoB-CoM heterodisulfide,ferredoxin reductase subunit C</fullName>
        <ecNumber evidence="1">1.8.98.5</ecNumber>
    </recommendedName>
    <alternativeName>
        <fullName evidence="1">CoB--CoM heterodisulfide reductase iron-sulfur subunit C</fullName>
    </alternativeName>
</protein>